<gene>
    <name evidence="2 4 6" type="primary">thi4</name>
    <name evidence="6" type="ordered locus">HVO_0665</name>
    <name evidence="7" type="ORF">C498_15398</name>
</gene>
<dbReference type="EC" id="2.4.2.60" evidence="1 2"/>
<dbReference type="EMBL" id="CP001956">
    <property type="protein sequence ID" value="ADE05087.1"/>
    <property type="molecule type" value="Genomic_DNA"/>
</dbReference>
<dbReference type="EMBL" id="AOHU01000097">
    <property type="protein sequence ID" value="ELY26470.1"/>
    <property type="molecule type" value="Genomic_DNA"/>
</dbReference>
<dbReference type="RefSeq" id="WP_004044270.1">
    <property type="nucleotide sequence ID" value="NC_013967.1"/>
</dbReference>
<dbReference type="SMR" id="D4GSS5"/>
<dbReference type="STRING" id="309800.HVO_0665"/>
<dbReference type="PaxDb" id="309800-C498_15398"/>
<dbReference type="EnsemblBacteria" id="ADE05087">
    <property type="protein sequence ID" value="ADE05087"/>
    <property type="gene ID" value="HVO_0665"/>
</dbReference>
<dbReference type="GeneID" id="8924004"/>
<dbReference type="KEGG" id="hvo:HVO_0665"/>
<dbReference type="PATRIC" id="fig|309800.29.peg.2977"/>
<dbReference type="eggNOG" id="arCOG00574">
    <property type="taxonomic scope" value="Archaea"/>
</dbReference>
<dbReference type="HOGENOM" id="CLU_053727_2_0_2"/>
<dbReference type="OrthoDB" id="4240at2157"/>
<dbReference type="BioCyc" id="MetaCyc:MONOMER-20828"/>
<dbReference type="UniPathway" id="UPA00060"/>
<dbReference type="Proteomes" id="UP000008243">
    <property type="component" value="Chromosome"/>
</dbReference>
<dbReference type="Proteomes" id="UP000011532">
    <property type="component" value="Unassembled WGS sequence"/>
</dbReference>
<dbReference type="GO" id="GO:0160205">
    <property type="term" value="F:cysteine-dependent adenosine diphosphate thiazole synthase activity"/>
    <property type="evidence" value="ECO:0007669"/>
    <property type="project" value="RHEA"/>
</dbReference>
<dbReference type="GO" id="GO:0008198">
    <property type="term" value="F:ferrous iron binding"/>
    <property type="evidence" value="ECO:0000250"/>
    <property type="project" value="UniProtKB"/>
</dbReference>
<dbReference type="GO" id="GO:0009228">
    <property type="term" value="P:thiamine biosynthetic process"/>
    <property type="evidence" value="ECO:0000315"/>
    <property type="project" value="UniProtKB"/>
</dbReference>
<dbReference type="GO" id="GO:0009229">
    <property type="term" value="P:thiamine diphosphate biosynthetic process"/>
    <property type="evidence" value="ECO:0000315"/>
    <property type="project" value="UniProtKB"/>
</dbReference>
<dbReference type="GO" id="GO:0052837">
    <property type="term" value="P:thiazole biosynthetic process"/>
    <property type="evidence" value="ECO:0000315"/>
    <property type="project" value="UniProtKB"/>
</dbReference>
<dbReference type="Gene3D" id="3.50.50.60">
    <property type="entry name" value="FAD/NAD(P)-binding domain"/>
    <property type="match status" value="1"/>
</dbReference>
<dbReference type="HAMAP" id="MF_00304">
    <property type="entry name" value="Thi4"/>
    <property type="match status" value="1"/>
</dbReference>
<dbReference type="InterPro" id="IPR036188">
    <property type="entry name" value="FAD/NAD-bd_sf"/>
</dbReference>
<dbReference type="InterPro" id="IPR002922">
    <property type="entry name" value="Thi4_fam"/>
</dbReference>
<dbReference type="InterPro" id="IPR022828">
    <property type="entry name" value="Thi4_prok"/>
</dbReference>
<dbReference type="NCBIfam" id="TIGR00292">
    <property type="entry name" value="sulfide-dependent adenosine diphosphate thiazole synthase"/>
    <property type="match status" value="1"/>
</dbReference>
<dbReference type="PANTHER" id="PTHR43422">
    <property type="entry name" value="THIAMINE THIAZOLE SYNTHASE"/>
    <property type="match status" value="1"/>
</dbReference>
<dbReference type="PANTHER" id="PTHR43422:SF3">
    <property type="entry name" value="THIAMINE THIAZOLE SYNTHASE"/>
    <property type="match status" value="1"/>
</dbReference>
<dbReference type="Pfam" id="PF01946">
    <property type="entry name" value="Thi4"/>
    <property type="match status" value="1"/>
</dbReference>
<dbReference type="PRINTS" id="PR00411">
    <property type="entry name" value="PNDRDTASEI"/>
</dbReference>
<dbReference type="SUPFAM" id="SSF51905">
    <property type="entry name" value="FAD/NAD(P)-binding domain"/>
    <property type="match status" value="1"/>
</dbReference>
<name>THI4_HALVD</name>
<reference evidence="6 8" key="1">
    <citation type="journal article" date="2010" name="PLoS ONE">
        <title>The complete genome sequence of Haloferax volcanii DS2, a model archaeon.</title>
        <authorList>
            <person name="Hartman A.L."/>
            <person name="Norais C."/>
            <person name="Badger J.H."/>
            <person name="Delmas S."/>
            <person name="Haldenby S."/>
            <person name="Madupu R."/>
            <person name="Robinson J."/>
            <person name="Khouri H."/>
            <person name="Ren Q."/>
            <person name="Lowe T.M."/>
            <person name="Maupin-Furlow J."/>
            <person name="Pohlschroder M."/>
            <person name="Daniels C."/>
            <person name="Pfeiffer F."/>
            <person name="Allers T."/>
            <person name="Eisen J.A."/>
        </authorList>
    </citation>
    <scope>NUCLEOTIDE SEQUENCE [LARGE SCALE GENOMIC DNA]</scope>
    <source>
        <strain evidence="8">ATCC 29605 / DSM 3757 / JCM 8879 / NBRC 14742 / NCIMB 2012 / VKM B-1768 / DS2</strain>
    </source>
</reference>
<reference evidence="7 9" key="2">
    <citation type="journal article" date="2014" name="PLoS Genet.">
        <title>Phylogenetically driven sequencing of extremely halophilic archaea reveals strategies for static and dynamic osmo-response.</title>
        <authorList>
            <person name="Becker E.A."/>
            <person name="Seitzer P.M."/>
            <person name="Tritt A."/>
            <person name="Larsen D."/>
            <person name="Krusor M."/>
            <person name="Yao A.I."/>
            <person name="Wu D."/>
            <person name="Madern D."/>
            <person name="Eisen J.A."/>
            <person name="Darling A.E."/>
            <person name="Facciotti M.T."/>
        </authorList>
    </citation>
    <scope>NUCLEOTIDE SEQUENCE [LARGE SCALE GENOMIC DNA]</scope>
    <source>
        <strain evidence="9">ATCC 29605 / DSM 3757 / JCM 8879 / NBRC 14742 / NCIMB 2012 / VKM B-1768 / DS2</strain>
    </source>
</reference>
<reference key="3">
    <citation type="journal article" date="2014" name="BMC Microbiol.">
        <title>Conserved active site cysteine residue of archaeal THI4 homolog is essential for thiamine biosynthesis in Haloferax volcanii.</title>
        <authorList>
            <person name="Hwang S."/>
            <person name="Cordova B."/>
            <person name="Chavarria N."/>
            <person name="Elbanna D."/>
            <person name="McHugh S."/>
            <person name="Rojas J."/>
            <person name="Pfeiffer F."/>
            <person name="Maupin-Furlow J.A."/>
        </authorList>
    </citation>
    <scope>FUNCTION</scope>
    <scope>DISRUPTION PHENOTYPE</scope>
    <scope>MUTAGENESIS OF CYS-165</scope>
    <scope>3D-STRUCTURE MODELING</scope>
    <scope>PHYLOGENETIC ANALYSIS</scope>
    <source>
        <strain evidence="4">DS2 / DS70</strain>
    </source>
</reference>
<sequence>MSFDGFTDATEAQVTRAISDSWMEEFRERTDTEVIVVGGGPSGLVAAKELAERGVDVTIVEKNNYLGGGFWLGGFLMNKVTVRDPAQRVLDELGVPYEESDEAEGLYVADGPHACSALIKAACDAGAKIQNMTEFTDVVLREDDRVGGIVMNWTPVHALPRELTCVDPIAVESDLVLDATGHDAVVLSKLSERGVLDVNGIEHAKEHNTGMDKTADGEYGAPGHDSPGHDSMWVSESEDSIVDATGVVHPGVVASGMAVATAHHLPRMGPTFGAMLLSGRQAAQSCLDELGRDAPDVSISGPAPADD</sequence>
<keyword id="KW-0408">Iron</keyword>
<keyword id="KW-0479">Metal-binding</keyword>
<keyword id="KW-0520">NAD</keyword>
<keyword id="KW-1185">Reference proteome</keyword>
<keyword id="KW-0784">Thiamine biosynthesis</keyword>
<keyword id="KW-0808">Transferase</keyword>
<feature type="chain" id="PRO_0000454766" description="Thiamine thiazole synthase">
    <location>
        <begin position="1"/>
        <end position="307"/>
    </location>
</feature>
<feature type="binding site" description="in other chain" evidence="2">
    <location>
        <position position="42"/>
    </location>
    <ligand>
        <name>NAD(+)</name>
        <dbReference type="ChEBI" id="CHEBI:57540"/>
        <note>ligand shared between two adjacent protomers</note>
    </ligand>
</feature>
<feature type="binding site" description="in other chain" evidence="2">
    <location>
        <begin position="61"/>
        <end position="62"/>
    </location>
    <ligand>
        <name>NAD(+)</name>
        <dbReference type="ChEBI" id="CHEBI:57540"/>
        <note>ligand shared between two adjacent protomers</note>
    </ligand>
</feature>
<feature type="binding site" description="in other chain" evidence="2">
    <location>
        <position position="69"/>
    </location>
    <ligand>
        <name>NAD(+)</name>
        <dbReference type="ChEBI" id="CHEBI:57540"/>
        <note>ligand shared between two adjacent protomers</note>
    </ligand>
</feature>
<feature type="binding site" evidence="2">
    <location>
        <position position="167"/>
    </location>
    <ligand>
        <name>Fe cation</name>
        <dbReference type="ChEBI" id="CHEBI:24875"/>
        <note>ligand shared between two adjacent protomers</note>
    </ligand>
</feature>
<feature type="binding site" evidence="2">
    <location>
        <position position="167"/>
    </location>
    <ligand>
        <name>NAD(+)</name>
        <dbReference type="ChEBI" id="CHEBI:57540"/>
        <note>ligand shared between two adjacent protomers</note>
    </ligand>
</feature>
<feature type="binding site" description="in other chain" evidence="2">
    <location>
        <position position="182"/>
    </location>
    <ligand>
        <name>Fe cation</name>
        <dbReference type="ChEBI" id="CHEBI:24875"/>
        <note>ligand shared between two adjacent protomers</note>
    </ligand>
</feature>
<feature type="binding site" description="in other chain" evidence="2">
    <location>
        <position position="257"/>
    </location>
    <ligand>
        <name>NAD(+)</name>
        <dbReference type="ChEBI" id="CHEBI:57540"/>
        <note>ligand shared between two adjacent protomers</note>
    </ligand>
</feature>
<feature type="binding site" evidence="2">
    <location>
        <position position="267"/>
    </location>
    <ligand>
        <name>glycine</name>
        <dbReference type="ChEBI" id="CHEBI:57305"/>
    </ligand>
</feature>
<feature type="modified residue" description="2,3-didehydroalanine (Cys)" evidence="1 2">
    <location>
        <position position="165"/>
    </location>
</feature>
<feature type="mutagenesis site" description="Not able to trans-complement the deletion mutant of this gene." evidence="3">
    <original>C</original>
    <variation>A</variation>
    <location>
        <position position="165"/>
    </location>
</feature>
<comment type="function">
    <text evidence="2 3">Involved in biosynthesis of the thiamine precursor thiazole (PubMed:25348237). Catalyzes the conversion of NAD and glycine to adenosine diphosphate 5-(2-hydroxyethyl)-4-methylthiazole-2-carboxylic acid (ADT), an adenylated thiazole intermediate. The reaction includes an iron-dependent sulfide transfer from a conserved cysteine residue of the protein to a thiazole intermediate. The enzyme can only undergo a single turnover, which suggests it is a suicide enzyme (By similarity).</text>
</comment>
<comment type="catalytic activity">
    <reaction evidence="1 2">
        <text>[ADP-thiazole synthase]-L-cysteine + glycine + NAD(+) = [ADP-thiazole synthase]-dehydroalanine + ADP-5-ethyl-4-methylthiazole-2-carboxylate + nicotinamide + 3 H2O + 2 H(+)</text>
        <dbReference type="Rhea" id="RHEA:55708"/>
        <dbReference type="Rhea" id="RHEA-COMP:14264"/>
        <dbReference type="Rhea" id="RHEA-COMP:14265"/>
        <dbReference type="ChEBI" id="CHEBI:15377"/>
        <dbReference type="ChEBI" id="CHEBI:15378"/>
        <dbReference type="ChEBI" id="CHEBI:17154"/>
        <dbReference type="ChEBI" id="CHEBI:29950"/>
        <dbReference type="ChEBI" id="CHEBI:57305"/>
        <dbReference type="ChEBI" id="CHEBI:57540"/>
        <dbReference type="ChEBI" id="CHEBI:90873"/>
        <dbReference type="ChEBI" id="CHEBI:139151"/>
        <dbReference type="EC" id="2.4.2.60"/>
    </reaction>
</comment>
<comment type="cofactor">
    <cofactor evidence="2">
        <name>Fe(2+)</name>
        <dbReference type="ChEBI" id="CHEBI:29033"/>
    </cofactor>
</comment>
<comment type="pathway">
    <text evidence="2">Cofactor biosynthesis; thiamine diphosphate biosynthesis.</text>
</comment>
<comment type="subunit">
    <text evidence="2">Homooctamer; tetramer of dimers.</text>
</comment>
<comment type="PTM">
    <text evidence="1 2">During the catalytic reaction, a sulfide is transferred from Cys-165 to a reaction intermediate, generating a dehydroalanine residue.</text>
</comment>
<comment type="disruption phenotype">
    <text evidence="3">Cells lacking this gene are auxotrophic for thiamine. The mutants thiamine requirement can be overcome by adding thiazole moiety 4-methyl-5-(beta-hydroxyethyl)thiazole (THZ) to the growth medium.</text>
</comment>
<comment type="similarity">
    <text evidence="2 5">Belongs to the THI4 family.</text>
</comment>
<accession>D4GSS5</accession>
<accession>A0A384KZ83</accession>
<accession>L9UNI3</accession>
<evidence type="ECO:0000250" key="1">
    <source>
        <dbReference type="UniProtKB" id="P32318"/>
    </source>
</evidence>
<evidence type="ECO:0000255" key="2">
    <source>
        <dbReference type="HAMAP-Rule" id="MF_00304"/>
    </source>
</evidence>
<evidence type="ECO:0000269" key="3">
    <source>
    </source>
</evidence>
<evidence type="ECO:0000303" key="4">
    <source>
    </source>
</evidence>
<evidence type="ECO:0000305" key="5"/>
<evidence type="ECO:0000312" key="6">
    <source>
        <dbReference type="EMBL" id="ADE05087.1"/>
    </source>
</evidence>
<evidence type="ECO:0000312" key="7">
    <source>
        <dbReference type="EMBL" id="ELY26470.1"/>
    </source>
</evidence>
<evidence type="ECO:0000312" key="8">
    <source>
        <dbReference type="Proteomes" id="UP000008243"/>
    </source>
</evidence>
<evidence type="ECO:0000312" key="9">
    <source>
        <dbReference type="Proteomes" id="UP000011532"/>
    </source>
</evidence>
<organism evidence="6">
    <name type="scientific">Haloferax volcanii (strain ATCC 29605 / DSM 3757 / JCM 8879 / NBRC 14742 / NCIMB 2012 / VKM B-1768 / DS2)</name>
    <name type="common">Halobacterium volcanii</name>
    <dbReference type="NCBI Taxonomy" id="309800"/>
    <lineage>
        <taxon>Archaea</taxon>
        <taxon>Methanobacteriati</taxon>
        <taxon>Methanobacteriota</taxon>
        <taxon>Stenosarchaea group</taxon>
        <taxon>Halobacteria</taxon>
        <taxon>Halobacteriales</taxon>
        <taxon>Haloferacaceae</taxon>
        <taxon>Haloferax</taxon>
    </lineage>
</organism>
<proteinExistence type="evidence at protein level"/>
<protein>
    <recommendedName>
        <fullName evidence="2 4">Thiamine thiazole synthase</fullName>
        <ecNumber evidence="1 2">2.4.2.60</ecNumber>
    </recommendedName>
    <alternativeName>
        <fullName evidence="5">Thiazole biosynthetic enzyme</fullName>
    </alternativeName>
</protein>